<protein>
    <recommendedName>
        <fullName evidence="4">Supwaprin-c</fullName>
    </recommendedName>
</protein>
<comment type="function">
    <text evidence="1">Damages membranes of susceptible bacteria. Has no hemolytic activity. Not toxic to mice. Does not inhibit the proteinases elastase and cathepsin G.</text>
</comment>
<comment type="subcellular location">
    <subcellularLocation>
        <location evidence="6">Secreted</location>
    </subcellularLocation>
</comment>
<comment type="tissue specificity">
    <text evidence="6">Expressed by the venom gland.</text>
</comment>
<comment type="similarity">
    <text evidence="5">Belongs to the venom waprin family.</text>
</comment>
<name>WAPC_AUSSU</name>
<sequence length="75" mass="8361">MSSGGLLLLLGLLTLWAELTPVSGQDRPVKPGLCPPRPQKPPCVKECKNDWSCRGEQKCCHYGCIYECRDPIFVK</sequence>
<dbReference type="EMBL" id="EU401831">
    <property type="protein sequence ID" value="ACC77780.1"/>
    <property type="molecule type" value="Genomic_DNA"/>
</dbReference>
<dbReference type="SMR" id="B5L5P3"/>
<dbReference type="GO" id="GO:0005576">
    <property type="term" value="C:extracellular region"/>
    <property type="evidence" value="ECO:0000250"/>
    <property type="project" value="UniProtKB"/>
</dbReference>
<dbReference type="GO" id="GO:0005615">
    <property type="term" value="C:extracellular space"/>
    <property type="evidence" value="ECO:0007669"/>
    <property type="project" value="TreeGrafter"/>
</dbReference>
<dbReference type="GO" id="GO:0004867">
    <property type="term" value="F:serine-type endopeptidase inhibitor activity"/>
    <property type="evidence" value="ECO:0007669"/>
    <property type="project" value="TreeGrafter"/>
</dbReference>
<dbReference type="GO" id="GO:0019731">
    <property type="term" value="P:antibacterial humoral response"/>
    <property type="evidence" value="ECO:0007669"/>
    <property type="project" value="TreeGrafter"/>
</dbReference>
<dbReference type="GO" id="GO:0045087">
    <property type="term" value="P:innate immune response"/>
    <property type="evidence" value="ECO:0007669"/>
    <property type="project" value="TreeGrafter"/>
</dbReference>
<dbReference type="GO" id="GO:0044278">
    <property type="term" value="P:venom-mediated disruption of cell wall in another organism"/>
    <property type="evidence" value="ECO:0000250"/>
    <property type="project" value="UniProtKB"/>
</dbReference>
<dbReference type="Gene3D" id="4.10.75.10">
    <property type="entry name" value="Elafin-like"/>
    <property type="match status" value="1"/>
</dbReference>
<dbReference type="InterPro" id="IPR036645">
    <property type="entry name" value="Elafin-like_sf"/>
</dbReference>
<dbReference type="InterPro" id="IPR008197">
    <property type="entry name" value="WAP_dom"/>
</dbReference>
<dbReference type="InterPro" id="IPR050514">
    <property type="entry name" value="WAP_four-disulfide_core"/>
</dbReference>
<dbReference type="PANTHER" id="PTHR19441:SF30">
    <property type="entry name" value="ELAFIN"/>
    <property type="match status" value="1"/>
</dbReference>
<dbReference type="PANTHER" id="PTHR19441">
    <property type="entry name" value="WHEY ACDIC PROTEIN WAP"/>
    <property type="match status" value="1"/>
</dbReference>
<dbReference type="Pfam" id="PF00095">
    <property type="entry name" value="WAP"/>
    <property type="match status" value="1"/>
</dbReference>
<dbReference type="PRINTS" id="PR00003">
    <property type="entry name" value="4DISULPHCORE"/>
</dbReference>
<dbReference type="SMART" id="SM00217">
    <property type="entry name" value="WAP"/>
    <property type="match status" value="1"/>
</dbReference>
<dbReference type="SUPFAM" id="SSF57256">
    <property type="entry name" value="Elafin-like"/>
    <property type="match status" value="1"/>
</dbReference>
<dbReference type="PROSITE" id="PS51390">
    <property type="entry name" value="WAP"/>
    <property type="match status" value="1"/>
</dbReference>
<accession>B5L5P3</accession>
<evidence type="ECO:0000250" key="1">
    <source>
        <dbReference type="UniProtKB" id="P83952"/>
    </source>
</evidence>
<evidence type="ECO:0000255" key="2"/>
<evidence type="ECO:0000255" key="3">
    <source>
        <dbReference type="PROSITE-ProRule" id="PRU00722"/>
    </source>
</evidence>
<evidence type="ECO:0000303" key="4">
    <source>
    </source>
</evidence>
<evidence type="ECO:0000305" key="5"/>
<evidence type="ECO:0000305" key="6">
    <source>
    </source>
</evidence>
<organism>
    <name type="scientific">Austrelaps superbus</name>
    <name type="common">Lowland copperhead snake</name>
    <name type="synonym">Hoplocephalus superbus</name>
    <dbReference type="NCBI Taxonomy" id="29156"/>
    <lineage>
        <taxon>Eukaryota</taxon>
        <taxon>Metazoa</taxon>
        <taxon>Chordata</taxon>
        <taxon>Craniata</taxon>
        <taxon>Vertebrata</taxon>
        <taxon>Euteleostomi</taxon>
        <taxon>Lepidosauria</taxon>
        <taxon>Squamata</taxon>
        <taxon>Bifurcata</taxon>
        <taxon>Unidentata</taxon>
        <taxon>Episquamata</taxon>
        <taxon>Toxicofera</taxon>
        <taxon>Serpentes</taxon>
        <taxon>Colubroidea</taxon>
        <taxon>Elapidae</taxon>
        <taxon>Hydrophiinae</taxon>
        <taxon>Austrelaps</taxon>
    </lineage>
</organism>
<feature type="signal peptide" evidence="2">
    <location>
        <begin position="1"/>
        <end position="24"/>
    </location>
</feature>
<feature type="chain" id="PRO_5000395631" description="Supwaprin-c">
    <location>
        <begin position="25"/>
        <end position="75"/>
    </location>
</feature>
<feature type="domain" description="WAP" evidence="3">
    <location>
        <begin position="27"/>
        <end position="72"/>
    </location>
</feature>
<feature type="disulfide bond" evidence="3">
    <location>
        <begin position="34"/>
        <end position="60"/>
    </location>
</feature>
<feature type="disulfide bond" evidence="3">
    <location>
        <begin position="43"/>
        <end position="64"/>
    </location>
</feature>
<feature type="disulfide bond" evidence="3">
    <location>
        <begin position="47"/>
        <end position="59"/>
    </location>
</feature>
<feature type="disulfide bond" evidence="3">
    <location>
        <begin position="53"/>
        <end position="68"/>
    </location>
</feature>
<keyword id="KW-0044">Antibiotic</keyword>
<keyword id="KW-0929">Antimicrobial</keyword>
<keyword id="KW-1015">Disulfide bond</keyword>
<keyword id="KW-0964">Secreted</keyword>
<keyword id="KW-0732">Signal</keyword>
<reference key="1">
    <citation type="journal article" date="2008" name="Cell. Mol. Life Sci.">
        <title>Common evolution of waprin and Kunitz-like toxin families in Australian venomous snakes.</title>
        <authorList>
            <person name="St Pierre L."/>
            <person name="Earl S.T."/>
            <person name="Filippovich I."/>
            <person name="Sorokina N."/>
            <person name="Masci P.P."/>
            <person name="De Jersey J."/>
            <person name="Lavin M.F."/>
        </authorList>
    </citation>
    <scope>NUCLEOTIDE SEQUENCE [GENOMIC DNA]</scope>
    <source>
        <tissue>Venom gland</tissue>
    </source>
</reference>
<proteinExistence type="inferred from homology"/>